<comment type="function">
    <text evidence="1">Lyase that catalyzes the C1-decarboxylation of 4-hydroxy-3-methoxy-5-(all-trans-polyprenyl)benzoic acid into 2-methoxy-6-(all-trans-polyprenyl)phenol during ubiquinone biosynthesis.</text>
</comment>
<comment type="catalytic activity">
    <reaction evidence="1">
        <text>a 4-hydroxy-3-methoxy-5-(all-trans-polyprenyl)benzoate + H(+) = a 2-methoxy-6-(all-trans-polyprenyl)phenol + CO2</text>
        <dbReference type="Rhea" id="RHEA:81179"/>
        <dbReference type="Rhea" id="RHEA-COMP:9551"/>
        <dbReference type="Rhea" id="RHEA-COMP:10931"/>
        <dbReference type="ChEBI" id="CHEBI:15378"/>
        <dbReference type="ChEBI" id="CHEBI:16526"/>
        <dbReference type="ChEBI" id="CHEBI:62731"/>
        <dbReference type="ChEBI" id="CHEBI:84443"/>
        <dbReference type="EC" id="4.1.1.130"/>
    </reaction>
</comment>
<comment type="cofactor">
    <cofactor evidence="1">
        <name>Zn(2+)</name>
        <dbReference type="ChEBI" id="CHEBI:29105"/>
    </cofactor>
</comment>
<comment type="pathway">
    <text evidence="1">Cofactor biosynthesis; ubiquinone biosynthesis.</text>
</comment>
<comment type="subunit">
    <text evidence="1">Component of a multi-subunit COQ enzyme complex, composed of at least COQ3, COQ4, COQ5, COQ6, COQ7 and COQ9.</text>
</comment>
<comment type="subcellular location">
    <subcellularLocation>
        <location evidence="1">Mitochondrion inner membrane</location>
        <topology evidence="1">Peripheral membrane protein</topology>
        <orientation evidence="1">Matrix side</orientation>
    </subcellularLocation>
</comment>
<comment type="miscellaneous">
    <text evidence="1">This protein may be expected to contain an N-terminal transit peptide but none has been predicted.</text>
</comment>
<comment type="similarity">
    <text evidence="1">Belongs to the COQ4 family.</text>
</comment>
<sequence length="303" mass="35073">MLIVQQFQKRSFIIPSLISSGLSYLSKDIRLADKMEDGELHFPKTEFEKSQNTSRPLFQRPEPNYPGHVPLYNFEKLLMFLGSSIGAFVNPTNNNFIVSLGESTAFPWVLNRLRTQMLNDPSGRQILKERPHMTSKSLNLDELKNYPDNSLGKSYFLWLEREGVSPDTRVPVKYITDPELAFVFQRYRECHDFYHTITGLPIVREGEIALKLFEFMNLGIPMTGLGALFAPIPIKSSQRRRLLSVYYPWAVKNGTICKPLINVYWEKIMKKDIDVLRSELGIEKPPDMRELRKKARSKKKQVA</sequence>
<organism>
    <name type="scientific">Komagataella phaffii (strain GS115 / ATCC 20864)</name>
    <name type="common">Yeast</name>
    <name type="synonym">Pichia pastoris</name>
    <dbReference type="NCBI Taxonomy" id="644223"/>
    <lineage>
        <taxon>Eukaryota</taxon>
        <taxon>Fungi</taxon>
        <taxon>Dikarya</taxon>
        <taxon>Ascomycota</taxon>
        <taxon>Saccharomycotina</taxon>
        <taxon>Pichiomycetes</taxon>
        <taxon>Pichiales</taxon>
        <taxon>Pichiaceae</taxon>
        <taxon>Komagataella</taxon>
    </lineage>
</organism>
<reference key="1">
    <citation type="journal article" date="2009" name="Nat. Biotechnol.">
        <title>Genome sequence of the recombinant protein production host Pichia pastoris.</title>
        <authorList>
            <person name="De Schutter K."/>
            <person name="Lin Y.-C."/>
            <person name="Tiels P."/>
            <person name="Van Hecke A."/>
            <person name="Glinka S."/>
            <person name="Weber-Lehmann J."/>
            <person name="Rouze P."/>
            <person name="Van de Peer Y."/>
            <person name="Callewaert N."/>
        </authorList>
    </citation>
    <scope>NUCLEOTIDE SEQUENCE [LARGE SCALE GENOMIC DNA]</scope>
    <source>
        <strain>GS115 / ATCC 20864</strain>
    </source>
</reference>
<dbReference type="EC" id="4.1.1.130" evidence="1"/>
<dbReference type="EMBL" id="FN392321">
    <property type="protein sequence ID" value="CAY70774.1"/>
    <property type="molecule type" value="Genomic_DNA"/>
</dbReference>
<dbReference type="RefSeq" id="XP_002492953.1">
    <property type="nucleotide sequence ID" value="XM_002492908.1"/>
</dbReference>
<dbReference type="SMR" id="C4R5D8"/>
<dbReference type="FunCoup" id="C4R5D8">
    <property type="interactions" value="532"/>
</dbReference>
<dbReference type="STRING" id="644223.C4R5D8"/>
<dbReference type="EnsemblFungi" id="CAY70774">
    <property type="protein sequence ID" value="CAY70774"/>
    <property type="gene ID" value="PAS_chr3_0725"/>
</dbReference>
<dbReference type="GeneID" id="8200420"/>
<dbReference type="KEGG" id="ppa:PAS_chr3_0725"/>
<dbReference type="eggNOG" id="KOG3244">
    <property type="taxonomic scope" value="Eukaryota"/>
</dbReference>
<dbReference type="HOGENOM" id="CLU_061241_0_2_1"/>
<dbReference type="InParanoid" id="C4R5D8"/>
<dbReference type="OMA" id="YYERHFH"/>
<dbReference type="OrthoDB" id="4249at2759"/>
<dbReference type="UniPathway" id="UPA00232"/>
<dbReference type="Proteomes" id="UP000000314">
    <property type="component" value="Chromosome 3"/>
</dbReference>
<dbReference type="GO" id="GO:0031314">
    <property type="term" value="C:extrinsic component of mitochondrial inner membrane"/>
    <property type="evidence" value="ECO:0007669"/>
    <property type="project" value="UniProtKB-UniRule"/>
</dbReference>
<dbReference type="GO" id="GO:0006744">
    <property type="term" value="P:ubiquinone biosynthetic process"/>
    <property type="evidence" value="ECO:0007669"/>
    <property type="project" value="UniProtKB-UniRule"/>
</dbReference>
<dbReference type="HAMAP" id="MF_03111">
    <property type="entry name" value="Coq4"/>
    <property type="match status" value="1"/>
</dbReference>
<dbReference type="InterPro" id="IPR007715">
    <property type="entry name" value="Coq4"/>
</dbReference>
<dbReference type="InterPro" id="IPR027540">
    <property type="entry name" value="Coq4_euk"/>
</dbReference>
<dbReference type="PANTHER" id="PTHR12922">
    <property type="entry name" value="UBIQUINONE BIOSYNTHESIS PROTEIN"/>
    <property type="match status" value="1"/>
</dbReference>
<dbReference type="PANTHER" id="PTHR12922:SF7">
    <property type="entry name" value="UBIQUINONE BIOSYNTHESIS PROTEIN COQ4 HOMOLOG, MITOCHONDRIAL"/>
    <property type="match status" value="1"/>
</dbReference>
<dbReference type="Pfam" id="PF05019">
    <property type="entry name" value="Coq4"/>
    <property type="match status" value="1"/>
</dbReference>
<feature type="chain" id="PRO_0000388130" description="Ubiquinone biosynthesis protein COQ4, mitochondrial">
    <location>
        <begin position="1"/>
        <end position="303"/>
    </location>
</feature>
<feature type="binding site" evidence="1">
    <location>
        <position position="191"/>
    </location>
    <ligand>
        <name>Zn(2+)</name>
        <dbReference type="ChEBI" id="CHEBI:29105"/>
    </ligand>
</feature>
<feature type="binding site" evidence="1">
    <location>
        <position position="192"/>
    </location>
    <ligand>
        <name>Zn(2+)</name>
        <dbReference type="ChEBI" id="CHEBI:29105"/>
    </ligand>
</feature>
<feature type="binding site" evidence="1">
    <location>
        <position position="195"/>
    </location>
    <ligand>
        <name>Zn(2+)</name>
        <dbReference type="ChEBI" id="CHEBI:29105"/>
    </ligand>
</feature>
<feature type="binding site" evidence="1">
    <location>
        <position position="207"/>
    </location>
    <ligand>
        <name>Zn(2+)</name>
        <dbReference type="ChEBI" id="CHEBI:29105"/>
    </ligand>
</feature>
<evidence type="ECO:0000255" key="1">
    <source>
        <dbReference type="HAMAP-Rule" id="MF_03111"/>
    </source>
</evidence>
<name>COQ4_KOMPG</name>
<protein>
    <recommendedName>
        <fullName evidence="1">Ubiquinone biosynthesis protein COQ4, mitochondrial</fullName>
    </recommendedName>
    <alternativeName>
        <fullName>4-hydroxy-3-methoxy-5-polyprenylbenzoate decarboxylase</fullName>
        <ecNumber evidence="1">4.1.1.130</ecNumber>
    </alternativeName>
    <alternativeName>
        <fullName evidence="1">Coenzyme Q biosynthesis protein 4</fullName>
    </alternativeName>
</protein>
<keyword id="KW-0456">Lyase</keyword>
<keyword id="KW-0472">Membrane</keyword>
<keyword id="KW-0479">Metal-binding</keyword>
<keyword id="KW-0496">Mitochondrion</keyword>
<keyword id="KW-0999">Mitochondrion inner membrane</keyword>
<keyword id="KW-1185">Reference proteome</keyword>
<keyword id="KW-0831">Ubiquinone biosynthesis</keyword>
<keyword id="KW-0862">Zinc</keyword>
<gene>
    <name evidence="1" type="primary">COQ4</name>
    <name type="ordered locus">PAS_chr3_0725</name>
</gene>
<accession>C4R5D8</accession>
<proteinExistence type="inferred from homology"/>